<organism>
    <name type="scientific">Mus musculus</name>
    <name type="common">Mouse</name>
    <dbReference type="NCBI Taxonomy" id="10090"/>
    <lineage>
        <taxon>Eukaryota</taxon>
        <taxon>Metazoa</taxon>
        <taxon>Chordata</taxon>
        <taxon>Craniata</taxon>
        <taxon>Vertebrata</taxon>
        <taxon>Euteleostomi</taxon>
        <taxon>Mammalia</taxon>
        <taxon>Eutheria</taxon>
        <taxon>Euarchontoglires</taxon>
        <taxon>Glires</taxon>
        <taxon>Rodentia</taxon>
        <taxon>Myomorpha</taxon>
        <taxon>Muroidea</taxon>
        <taxon>Muridae</taxon>
        <taxon>Murinae</taxon>
        <taxon>Mus</taxon>
        <taxon>Mus</taxon>
    </lineage>
</organism>
<proteinExistence type="evidence at transcript level"/>
<reference key="1">
    <citation type="book" date="2001" name="Andrology in the 21th Century. Proceeding of the VIIth International Congress of Andrology">
        <title>Isolation and characterization of haploid germ cell-specific succinyl CoA:3-oxo acid CoA transferase (scot-t1 and scot-t2).</title>
        <editorList>
            <person name="Robaire B."/>
            <person name="Chemes H."/>
            <person name="Morales C.R."/>
        </editorList>
        <authorList>
            <person name="Tanaka H."/>
            <person name="Koga M."/>
            <person name="Yomogida K."/>
            <person name="Iguchi N."/>
            <person name="Nozaki M."/>
            <person name="Onishi M."/>
            <person name="Egydio de Carvalho C."/>
            <person name="Nakamura Y."/>
            <person name="Miyagawa Y."/>
            <person name="Takeyama M."/>
            <person name="Matsumiya K."/>
            <person name="Okuyama A."/>
            <person name="Nishimune Y."/>
        </authorList>
    </citation>
    <scope>NUCLEOTIDE SEQUENCE [MRNA]</scope>
    <source>
        <strain>C57BL/6J</strain>
        <tissue>Testis</tissue>
    </source>
</reference>
<reference key="2">
    <citation type="journal article" date="2004" name="Genomics">
        <title>Gene structure and evolution of testicular haploid germ cell-specific genes, Oxct2a and Oxct2b.</title>
        <authorList>
            <person name="Onishi M."/>
            <person name="Yasunaga T."/>
            <person name="Tanaka H."/>
            <person name="Nishimune Y."/>
            <person name="Nozaki M."/>
        </authorList>
    </citation>
    <scope>NUCLEOTIDE SEQUENCE [GENOMIC DNA]</scope>
    <source>
        <strain>129/Sv</strain>
    </source>
</reference>
<reference key="3">
    <citation type="journal article" date="2005" name="Science">
        <title>The transcriptional landscape of the mammalian genome.</title>
        <authorList>
            <person name="Carninci P."/>
            <person name="Kasukawa T."/>
            <person name="Katayama S."/>
            <person name="Gough J."/>
            <person name="Frith M.C."/>
            <person name="Maeda N."/>
            <person name="Oyama R."/>
            <person name="Ravasi T."/>
            <person name="Lenhard B."/>
            <person name="Wells C."/>
            <person name="Kodzius R."/>
            <person name="Shimokawa K."/>
            <person name="Bajic V.B."/>
            <person name="Brenner S.E."/>
            <person name="Batalov S."/>
            <person name="Forrest A.R."/>
            <person name="Zavolan M."/>
            <person name="Davis M.J."/>
            <person name="Wilming L.G."/>
            <person name="Aidinis V."/>
            <person name="Allen J.E."/>
            <person name="Ambesi-Impiombato A."/>
            <person name="Apweiler R."/>
            <person name="Aturaliya R.N."/>
            <person name="Bailey T.L."/>
            <person name="Bansal M."/>
            <person name="Baxter L."/>
            <person name="Beisel K.W."/>
            <person name="Bersano T."/>
            <person name="Bono H."/>
            <person name="Chalk A.M."/>
            <person name="Chiu K.P."/>
            <person name="Choudhary V."/>
            <person name="Christoffels A."/>
            <person name="Clutterbuck D.R."/>
            <person name="Crowe M.L."/>
            <person name="Dalla E."/>
            <person name="Dalrymple B.P."/>
            <person name="de Bono B."/>
            <person name="Della Gatta G."/>
            <person name="di Bernardo D."/>
            <person name="Down T."/>
            <person name="Engstrom P."/>
            <person name="Fagiolini M."/>
            <person name="Faulkner G."/>
            <person name="Fletcher C.F."/>
            <person name="Fukushima T."/>
            <person name="Furuno M."/>
            <person name="Futaki S."/>
            <person name="Gariboldi M."/>
            <person name="Georgii-Hemming P."/>
            <person name="Gingeras T.R."/>
            <person name="Gojobori T."/>
            <person name="Green R.E."/>
            <person name="Gustincich S."/>
            <person name="Harbers M."/>
            <person name="Hayashi Y."/>
            <person name="Hensch T.K."/>
            <person name="Hirokawa N."/>
            <person name="Hill D."/>
            <person name="Huminiecki L."/>
            <person name="Iacono M."/>
            <person name="Ikeo K."/>
            <person name="Iwama A."/>
            <person name="Ishikawa T."/>
            <person name="Jakt M."/>
            <person name="Kanapin A."/>
            <person name="Katoh M."/>
            <person name="Kawasawa Y."/>
            <person name="Kelso J."/>
            <person name="Kitamura H."/>
            <person name="Kitano H."/>
            <person name="Kollias G."/>
            <person name="Krishnan S.P."/>
            <person name="Kruger A."/>
            <person name="Kummerfeld S.K."/>
            <person name="Kurochkin I.V."/>
            <person name="Lareau L.F."/>
            <person name="Lazarevic D."/>
            <person name="Lipovich L."/>
            <person name="Liu J."/>
            <person name="Liuni S."/>
            <person name="McWilliam S."/>
            <person name="Madan Babu M."/>
            <person name="Madera M."/>
            <person name="Marchionni L."/>
            <person name="Matsuda H."/>
            <person name="Matsuzawa S."/>
            <person name="Miki H."/>
            <person name="Mignone F."/>
            <person name="Miyake S."/>
            <person name="Morris K."/>
            <person name="Mottagui-Tabar S."/>
            <person name="Mulder N."/>
            <person name="Nakano N."/>
            <person name="Nakauchi H."/>
            <person name="Ng P."/>
            <person name="Nilsson R."/>
            <person name="Nishiguchi S."/>
            <person name="Nishikawa S."/>
            <person name="Nori F."/>
            <person name="Ohara O."/>
            <person name="Okazaki Y."/>
            <person name="Orlando V."/>
            <person name="Pang K.C."/>
            <person name="Pavan W.J."/>
            <person name="Pavesi G."/>
            <person name="Pesole G."/>
            <person name="Petrovsky N."/>
            <person name="Piazza S."/>
            <person name="Reed J."/>
            <person name="Reid J.F."/>
            <person name="Ring B.Z."/>
            <person name="Ringwald M."/>
            <person name="Rost B."/>
            <person name="Ruan Y."/>
            <person name="Salzberg S.L."/>
            <person name="Sandelin A."/>
            <person name="Schneider C."/>
            <person name="Schoenbach C."/>
            <person name="Sekiguchi K."/>
            <person name="Semple C.A."/>
            <person name="Seno S."/>
            <person name="Sessa L."/>
            <person name="Sheng Y."/>
            <person name="Shibata Y."/>
            <person name="Shimada H."/>
            <person name="Shimada K."/>
            <person name="Silva D."/>
            <person name="Sinclair B."/>
            <person name="Sperling S."/>
            <person name="Stupka E."/>
            <person name="Sugiura K."/>
            <person name="Sultana R."/>
            <person name="Takenaka Y."/>
            <person name="Taki K."/>
            <person name="Tammoja K."/>
            <person name="Tan S.L."/>
            <person name="Tang S."/>
            <person name="Taylor M.S."/>
            <person name="Tegner J."/>
            <person name="Teichmann S.A."/>
            <person name="Ueda H.R."/>
            <person name="van Nimwegen E."/>
            <person name="Verardo R."/>
            <person name="Wei C.L."/>
            <person name="Yagi K."/>
            <person name="Yamanishi H."/>
            <person name="Zabarovsky E."/>
            <person name="Zhu S."/>
            <person name="Zimmer A."/>
            <person name="Hide W."/>
            <person name="Bult C."/>
            <person name="Grimmond S.M."/>
            <person name="Teasdale R.D."/>
            <person name="Liu E.T."/>
            <person name="Brusic V."/>
            <person name="Quackenbush J."/>
            <person name="Wahlestedt C."/>
            <person name="Mattick J.S."/>
            <person name="Hume D.A."/>
            <person name="Kai C."/>
            <person name="Sasaki D."/>
            <person name="Tomaru Y."/>
            <person name="Fukuda S."/>
            <person name="Kanamori-Katayama M."/>
            <person name="Suzuki M."/>
            <person name="Aoki J."/>
            <person name="Arakawa T."/>
            <person name="Iida J."/>
            <person name="Imamura K."/>
            <person name="Itoh M."/>
            <person name="Kato T."/>
            <person name="Kawaji H."/>
            <person name="Kawagashira N."/>
            <person name="Kawashima T."/>
            <person name="Kojima M."/>
            <person name="Kondo S."/>
            <person name="Konno H."/>
            <person name="Nakano K."/>
            <person name="Ninomiya N."/>
            <person name="Nishio T."/>
            <person name="Okada M."/>
            <person name="Plessy C."/>
            <person name="Shibata K."/>
            <person name="Shiraki T."/>
            <person name="Suzuki S."/>
            <person name="Tagami M."/>
            <person name="Waki K."/>
            <person name="Watahiki A."/>
            <person name="Okamura-Oho Y."/>
            <person name="Suzuki H."/>
            <person name="Kawai J."/>
            <person name="Hayashizaki Y."/>
        </authorList>
    </citation>
    <scope>NUCLEOTIDE SEQUENCE [LARGE SCALE MRNA]</scope>
    <source>
        <strain>C57BL/6J</strain>
        <tissue>Testis</tissue>
    </source>
</reference>
<reference key="4">
    <citation type="journal article" date="2009" name="PLoS Biol.">
        <title>Lineage-specific biology revealed by a finished genome assembly of the mouse.</title>
        <authorList>
            <person name="Church D.M."/>
            <person name="Goodstadt L."/>
            <person name="Hillier L.W."/>
            <person name="Zody M.C."/>
            <person name="Goldstein S."/>
            <person name="She X."/>
            <person name="Bult C.J."/>
            <person name="Agarwala R."/>
            <person name="Cherry J.L."/>
            <person name="DiCuccio M."/>
            <person name="Hlavina W."/>
            <person name="Kapustin Y."/>
            <person name="Meric P."/>
            <person name="Maglott D."/>
            <person name="Birtle Z."/>
            <person name="Marques A.C."/>
            <person name="Graves T."/>
            <person name="Zhou S."/>
            <person name="Teague B."/>
            <person name="Potamousis K."/>
            <person name="Churas C."/>
            <person name="Place M."/>
            <person name="Herschleb J."/>
            <person name="Runnheim R."/>
            <person name="Forrest D."/>
            <person name="Amos-Landgraf J."/>
            <person name="Schwartz D.C."/>
            <person name="Cheng Z."/>
            <person name="Lindblad-Toh K."/>
            <person name="Eichler E.E."/>
            <person name="Ponting C.P."/>
        </authorList>
    </citation>
    <scope>NUCLEOTIDE SEQUENCE [LARGE SCALE GENOMIC DNA]</scope>
    <source>
        <strain>C57BL/6J</strain>
    </source>
</reference>
<reference key="5">
    <citation type="journal article" date="2004" name="Genome Res.">
        <title>The status, quality, and expansion of the NIH full-length cDNA project: the Mammalian Gene Collection (MGC).</title>
        <authorList>
            <consortium name="The MGC Project Team"/>
        </authorList>
    </citation>
    <scope>NUCLEOTIDE SEQUENCE [LARGE SCALE MRNA]</scope>
    <source>
        <tissue>Brain</tissue>
    </source>
</reference>
<keyword id="KW-0496">Mitochondrion</keyword>
<keyword id="KW-1185">Reference proteome</keyword>
<keyword id="KW-0808">Transferase</keyword>
<keyword id="KW-0809">Transit peptide</keyword>
<sequence>MAALRLLAWALPRGVSALRPPPALPHRLIRRYVSDRSGSVHFYTDPVKAVEGVKDGSTVMLGGFGLCGIPENLIGALKTKGVKDLKIVSSNVGVDDFGLGILLASKQVRRVVCSYLGENALCEKLYLAGELELEMTPQGTLAERIRAGGTGVPAFYTPTGYGTLVQEGGSPIRYAPDGHLITLSEPREVREFQGRFYLLEHAIRADFALIKGWKADRSGNVIFRGSARNFNVPMCKAADISVVEVEEIVDVGTFAPEDIHVPNIYVDRVIKGPKFEKRIERLTTRDSKPAPGSKDNDPSRTRIIKRAALEFQDGMYANLGIGIPVLASNYISPKMTVYLHSENGILGLGPFPLKNEVDADVINAGKQTVTVVPGGCFFASDDSFAMIRGGHLQLTMLGAMQVSQYGDLANWMVPGKKVKGMGGAMDLVSSKKTRVVVTMEHCTKTKQPKILKKCTMPLTGKRCVDLIITEKAVFEVNHSKGLTLVELWEGSSVDDIKATTACSFAVSPNLKPMQQIKLDA</sequence>
<name>SCO2A_MOUSE</name>
<feature type="transit peptide" description="Mitochondrion" evidence="1">
    <location>
        <begin position="1"/>
        <end position="39"/>
    </location>
</feature>
<feature type="chain" id="PRO_0000366209" description="Succinyl-CoA:3-ketoacid coenzyme A transferase 2A, mitochondrial">
    <location>
        <begin position="40"/>
        <end position="520"/>
    </location>
</feature>
<feature type="region of interest" description="Disordered" evidence="3">
    <location>
        <begin position="280"/>
        <end position="299"/>
    </location>
</feature>
<feature type="active site" description="5-glutamyl coenzyme A thioester intermediate" evidence="2">
    <location>
        <position position="342"/>
    </location>
</feature>
<accession>Q9JJN4</accession>
<accession>B9EHG5</accession>
<evidence type="ECO:0000250" key="1"/>
<evidence type="ECO:0000255" key="2">
    <source>
        <dbReference type="PROSITE-ProRule" id="PRU10034"/>
    </source>
</evidence>
<evidence type="ECO:0000256" key="3">
    <source>
        <dbReference type="SAM" id="MobiDB-lite"/>
    </source>
</evidence>
<evidence type="ECO:0000305" key="4"/>
<dbReference type="EC" id="2.8.3.5"/>
<dbReference type="EMBL" id="AB022180">
    <property type="protein sequence ID" value="BAA97654.2"/>
    <property type="molecule type" value="mRNA"/>
</dbReference>
<dbReference type="EMBL" id="AB105454">
    <property type="protein sequence ID" value="BAC87737.1"/>
    <property type="molecule type" value="Genomic_DNA"/>
</dbReference>
<dbReference type="EMBL" id="AK077075">
    <property type="protein sequence ID" value="BAC36595.1"/>
    <property type="molecule type" value="mRNA"/>
</dbReference>
<dbReference type="EMBL" id="AL606917">
    <property type="status" value="NOT_ANNOTATED_CDS"/>
    <property type="molecule type" value="Genomic_DNA"/>
</dbReference>
<dbReference type="EMBL" id="BC137887">
    <property type="protein sequence ID" value="AAI37888.1"/>
    <property type="molecule type" value="mRNA"/>
</dbReference>
<dbReference type="EMBL" id="BC137888">
    <property type="protein sequence ID" value="AAI37889.1"/>
    <property type="molecule type" value="mRNA"/>
</dbReference>
<dbReference type="CCDS" id="CCDS18617.1"/>
<dbReference type="RefSeq" id="NP_071316.1">
    <property type="nucleotide sequence ID" value="NM_022033.4"/>
</dbReference>
<dbReference type="SMR" id="Q9JJN4"/>
<dbReference type="BioGRID" id="211021">
    <property type="interactions" value="1"/>
</dbReference>
<dbReference type="FunCoup" id="Q9JJN4">
    <property type="interactions" value="463"/>
</dbReference>
<dbReference type="IntAct" id="Q9JJN4">
    <property type="interactions" value="2"/>
</dbReference>
<dbReference type="MINT" id="Q9JJN4"/>
<dbReference type="STRING" id="10090.ENSMUSP00000099700"/>
<dbReference type="PhosphoSitePlus" id="Q9JJN4"/>
<dbReference type="jPOST" id="Q9JJN4"/>
<dbReference type="PaxDb" id="10090-ENSMUSP00000099700"/>
<dbReference type="PeptideAtlas" id="Q9JJN4"/>
<dbReference type="ProteomicsDB" id="253425"/>
<dbReference type="DNASU" id="64059"/>
<dbReference type="Ensembl" id="ENSMUST00000102640.2">
    <property type="protein sequence ID" value="ENSMUSP00000099700.2"/>
    <property type="gene ID" value="ENSMUSG00000076436.2"/>
</dbReference>
<dbReference type="GeneID" id="64059"/>
<dbReference type="KEGG" id="mmu:64059"/>
<dbReference type="UCSC" id="uc008uph.3">
    <property type="organism name" value="mouse"/>
</dbReference>
<dbReference type="AGR" id="MGI:1891061"/>
<dbReference type="CTD" id="64059"/>
<dbReference type="MGI" id="MGI:1891061">
    <property type="gene designation" value="Oxct2a"/>
</dbReference>
<dbReference type="VEuPathDB" id="HostDB:ENSMUSG00000076436"/>
<dbReference type="eggNOG" id="KOG3822">
    <property type="taxonomic scope" value="Eukaryota"/>
</dbReference>
<dbReference type="GeneTree" id="ENSGT00390000009130"/>
<dbReference type="HOGENOM" id="CLU_019942_1_3_1"/>
<dbReference type="InParanoid" id="Q9JJN4"/>
<dbReference type="OMA" id="MQVNQFG"/>
<dbReference type="OrthoDB" id="1933379at2759"/>
<dbReference type="PhylomeDB" id="Q9JJN4"/>
<dbReference type="TreeFam" id="TF313991"/>
<dbReference type="BRENDA" id="2.8.3.5">
    <property type="organism ID" value="3474"/>
</dbReference>
<dbReference type="Reactome" id="R-MMU-77108">
    <property type="pathway name" value="Utilization of Ketone Bodies"/>
</dbReference>
<dbReference type="UniPathway" id="UPA00929">
    <property type="reaction ID" value="UER00894"/>
</dbReference>
<dbReference type="BioGRID-ORCS" id="64059">
    <property type="hits" value="0 hits in 57 CRISPR screens"/>
</dbReference>
<dbReference type="ChiTaRS" id="Oxct1">
    <property type="organism name" value="mouse"/>
</dbReference>
<dbReference type="PRO" id="PR:Q9JJN4"/>
<dbReference type="Proteomes" id="UP000000589">
    <property type="component" value="Chromosome 4"/>
</dbReference>
<dbReference type="RNAct" id="Q9JJN4">
    <property type="molecule type" value="protein"/>
</dbReference>
<dbReference type="Bgee" id="ENSMUSG00000076436">
    <property type="expression patterns" value="Expressed in testis and 19 other cell types or tissues"/>
</dbReference>
<dbReference type="GO" id="GO:0005739">
    <property type="term" value="C:mitochondrion"/>
    <property type="evidence" value="ECO:0007005"/>
    <property type="project" value="MGI"/>
</dbReference>
<dbReference type="GO" id="GO:0008260">
    <property type="term" value="F:succinyl-CoA:3-oxo-acid CoA-transferase activity"/>
    <property type="evidence" value="ECO:0000314"/>
    <property type="project" value="MGI"/>
</dbReference>
<dbReference type="GO" id="GO:0046952">
    <property type="term" value="P:ketone body catabolic process"/>
    <property type="evidence" value="ECO:0007669"/>
    <property type="project" value="InterPro"/>
</dbReference>
<dbReference type="GO" id="GO:1902224">
    <property type="term" value="P:ketone body metabolic process"/>
    <property type="evidence" value="ECO:0000314"/>
    <property type="project" value="MGI"/>
</dbReference>
<dbReference type="GO" id="GO:0006104">
    <property type="term" value="P:succinyl-CoA metabolic process"/>
    <property type="evidence" value="ECO:0000247"/>
    <property type="project" value="MGI"/>
</dbReference>
<dbReference type="FunFam" id="3.40.1080.10:FF:000001">
    <property type="entry name" value="Succinyl-coa:3-ketoacid-coenzyme a transferase subunit b"/>
    <property type="match status" value="1"/>
</dbReference>
<dbReference type="FunFam" id="3.40.1080.10:FF:000002">
    <property type="entry name" value="Succinyl-CoA:3-ketoacid-coenzyme A transferase, mitochondrial"/>
    <property type="match status" value="1"/>
</dbReference>
<dbReference type="Gene3D" id="3.40.1080.10">
    <property type="entry name" value="Glutaconate Coenzyme A-transferase"/>
    <property type="match status" value="2"/>
</dbReference>
<dbReference type="InterPro" id="IPR012792">
    <property type="entry name" value="3-oxoacid_CoA-transf_A"/>
</dbReference>
<dbReference type="InterPro" id="IPR012791">
    <property type="entry name" value="3-oxoacid_CoA-transf_B"/>
</dbReference>
<dbReference type="InterPro" id="IPR014388">
    <property type="entry name" value="3-oxoacid_CoA-transferase"/>
</dbReference>
<dbReference type="InterPro" id="IPR004165">
    <property type="entry name" value="CoA_trans_fam_I"/>
</dbReference>
<dbReference type="InterPro" id="IPR004164">
    <property type="entry name" value="CoA_transf_AS"/>
</dbReference>
<dbReference type="InterPro" id="IPR004163">
    <property type="entry name" value="CoA_transf_BS"/>
</dbReference>
<dbReference type="InterPro" id="IPR037171">
    <property type="entry name" value="NagB/RpiA_transferase-like"/>
</dbReference>
<dbReference type="NCBIfam" id="TIGR02429">
    <property type="entry name" value="pcaI_scoA_fam"/>
    <property type="match status" value="1"/>
</dbReference>
<dbReference type="NCBIfam" id="TIGR02428">
    <property type="entry name" value="pcaJ_scoB_fam"/>
    <property type="match status" value="1"/>
</dbReference>
<dbReference type="PANTHER" id="PTHR13707">
    <property type="entry name" value="KETOACID-COENZYME A TRANSFERASE"/>
    <property type="match status" value="1"/>
</dbReference>
<dbReference type="PANTHER" id="PTHR13707:SF28">
    <property type="entry name" value="SUCCINYL-COA:3-KETOACID COENZYME A TRANSFERASE 2, MITOCHONDRIAL"/>
    <property type="match status" value="1"/>
</dbReference>
<dbReference type="Pfam" id="PF01144">
    <property type="entry name" value="CoA_trans"/>
    <property type="match status" value="2"/>
</dbReference>
<dbReference type="PIRSF" id="PIRSF000858">
    <property type="entry name" value="SCOT-t"/>
    <property type="match status" value="1"/>
</dbReference>
<dbReference type="SMART" id="SM00882">
    <property type="entry name" value="CoA_trans"/>
    <property type="match status" value="2"/>
</dbReference>
<dbReference type="SUPFAM" id="SSF100950">
    <property type="entry name" value="NagB/RpiA/CoA transferase-like"/>
    <property type="match status" value="2"/>
</dbReference>
<dbReference type="PROSITE" id="PS01273">
    <property type="entry name" value="COA_TRANSF_1"/>
    <property type="match status" value="1"/>
</dbReference>
<dbReference type="PROSITE" id="PS01274">
    <property type="entry name" value="COA_TRANSF_2"/>
    <property type="match status" value="1"/>
</dbReference>
<protein>
    <recommendedName>
        <fullName>Succinyl-CoA:3-ketoacid coenzyme A transferase 2A, mitochondrial</fullName>
        <ecNumber>2.8.3.5</ecNumber>
    </recommendedName>
    <alternativeName>
        <fullName>3-oxoacid CoA-transferase 2A</fullName>
    </alternativeName>
    <alternativeName>
        <fullName>Testis-specific succinyl-CoA:3-oxoacid CoA-transferase 1</fullName>
        <shortName>SCOT-t1</shortName>
    </alternativeName>
</protein>
<gene>
    <name type="primary">Oxct2a</name>
</gene>
<comment type="function">
    <text evidence="1">Key enzyme for ketone body catabolism. Transfers the CoA moiety from succinate to acetoacetate. Formation of the enzyme-CoA intermediate proceeds via an unstable anhydride species formed between the carboxylate groups of the enzyme and substrate (By similarity). Probably play and important roles in the energy metabolism of spermatozoa.</text>
</comment>
<comment type="catalytic activity">
    <reaction evidence="2">
        <text>a 3-oxo acid + succinyl-CoA = a 3-oxoacyl-CoA + succinate</text>
        <dbReference type="Rhea" id="RHEA:24564"/>
        <dbReference type="ChEBI" id="CHEBI:30031"/>
        <dbReference type="ChEBI" id="CHEBI:35973"/>
        <dbReference type="ChEBI" id="CHEBI:57292"/>
        <dbReference type="ChEBI" id="CHEBI:90726"/>
        <dbReference type="EC" id="2.8.3.5"/>
    </reaction>
</comment>
<comment type="pathway">
    <text>Ketone metabolism; succinyl-CoA degradation; acetoacetyl-CoA from succinyl-CoA: step 1/1.</text>
</comment>
<comment type="subunit">
    <text evidence="1">Homodimer.</text>
</comment>
<comment type="subcellular location">
    <subcellularLocation>
        <location evidence="1">Mitochondrion</location>
    </subcellularLocation>
</comment>
<comment type="similarity">
    <text evidence="4">Belongs to the 3-oxoacid CoA-transferase family.</text>
</comment>